<name>LPXK_PSYCK</name>
<keyword id="KW-0067">ATP-binding</keyword>
<keyword id="KW-0418">Kinase</keyword>
<keyword id="KW-0441">Lipid A biosynthesis</keyword>
<keyword id="KW-0444">Lipid biosynthesis</keyword>
<keyword id="KW-0443">Lipid metabolism</keyword>
<keyword id="KW-0547">Nucleotide-binding</keyword>
<keyword id="KW-0808">Transferase</keyword>
<dbReference type="EC" id="2.7.1.130" evidence="1"/>
<dbReference type="EMBL" id="CP000323">
    <property type="protein sequence ID" value="ABE74844.1"/>
    <property type="molecule type" value="Genomic_DNA"/>
</dbReference>
<dbReference type="RefSeq" id="WP_011513400.1">
    <property type="nucleotide sequence ID" value="NC_007969.1"/>
</dbReference>
<dbReference type="SMR" id="Q1QBV9"/>
<dbReference type="STRING" id="335284.Pcryo_1063"/>
<dbReference type="KEGG" id="pcr:Pcryo_1063"/>
<dbReference type="eggNOG" id="COG1663">
    <property type="taxonomic scope" value="Bacteria"/>
</dbReference>
<dbReference type="HOGENOM" id="CLU_038816_2_0_6"/>
<dbReference type="UniPathway" id="UPA00359">
    <property type="reaction ID" value="UER00482"/>
</dbReference>
<dbReference type="Proteomes" id="UP000002425">
    <property type="component" value="Chromosome"/>
</dbReference>
<dbReference type="GO" id="GO:0005886">
    <property type="term" value="C:plasma membrane"/>
    <property type="evidence" value="ECO:0007669"/>
    <property type="project" value="TreeGrafter"/>
</dbReference>
<dbReference type="GO" id="GO:0005524">
    <property type="term" value="F:ATP binding"/>
    <property type="evidence" value="ECO:0007669"/>
    <property type="project" value="UniProtKB-UniRule"/>
</dbReference>
<dbReference type="GO" id="GO:0009029">
    <property type="term" value="F:tetraacyldisaccharide 4'-kinase activity"/>
    <property type="evidence" value="ECO:0007669"/>
    <property type="project" value="UniProtKB-UniRule"/>
</dbReference>
<dbReference type="GO" id="GO:0009245">
    <property type="term" value="P:lipid A biosynthetic process"/>
    <property type="evidence" value="ECO:0007669"/>
    <property type="project" value="UniProtKB-UniRule"/>
</dbReference>
<dbReference type="GO" id="GO:0009244">
    <property type="term" value="P:lipopolysaccharide core region biosynthetic process"/>
    <property type="evidence" value="ECO:0007669"/>
    <property type="project" value="TreeGrafter"/>
</dbReference>
<dbReference type="HAMAP" id="MF_00409">
    <property type="entry name" value="LpxK"/>
    <property type="match status" value="1"/>
</dbReference>
<dbReference type="InterPro" id="IPR003758">
    <property type="entry name" value="LpxK"/>
</dbReference>
<dbReference type="InterPro" id="IPR027417">
    <property type="entry name" value="P-loop_NTPase"/>
</dbReference>
<dbReference type="NCBIfam" id="TIGR00682">
    <property type="entry name" value="lpxK"/>
    <property type="match status" value="1"/>
</dbReference>
<dbReference type="PANTHER" id="PTHR42724">
    <property type="entry name" value="TETRAACYLDISACCHARIDE 4'-KINASE"/>
    <property type="match status" value="1"/>
</dbReference>
<dbReference type="PANTHER" id="PTHR42724:SF1">
    <property type="entry name" value="TETRAACYLDISACCHARIDE 4'-KINASE, MITOCHONDRIAL-RELATED"/>
    <property type="match status" value="1"/>
</dbReference>
<dbReference type="Pfam" id="PF02606">
    <property type="entry name" value="LpxK"/>
    <property type="match status" value="1"/>
</dbReference>
<dbReference type="SUPFAM" id="SSF52540">
    <property type="entry name" value="P-loop containing nucleoside triphosphate hydrolases"/>
    <property type="match status" value="1"/>
</dbReference>
<evidence type="ECO:0000255" key="1">
    <source>
        <dbReference type="HAMAP-Rule" id="MF_00409"/>
    </source>
</evidence>
<comment type="function">
    <text evidence="1">Transfers the gamma-phosphate of ATP to the 4'-position of a tetraacyldisaccharide 1-phosphate intermediate (termed DS-1-P) to form tetraacyldisaccharide 1,4'-bis-phosphate (lipid IVA).</text>
</comment>
<comment type="catalytic activity">
    <reaction evidence="1">
        <text>a lipid A disaccharide + ATP = a lipid IVA + ADP + H(+)</text>
        <dbReference type="Rhea" id="RHEA:67840"/>
        <dbReference type="ChEBI" id="CHEBI:15378"/>
        <dbReference type="ChEBI" id="CHEBI:30616"/>
        <dbReference type="ChEBI" id="CHEBI:176343"/>
        <dbReference type="ChEBI" id="CHEBI:176425"/>
        <dbReference type="ChEBI" id="CHEBI:456216"/>
        <dbReference type="EC" id="2.7.1.130"/>
    </reaction>
</comment>
<comment type="pathway">
    <text evidence="1">Glycolipid biosynthesis; lipid IV(A) biosynthesis; lipid IV(A) from (3R)-3-hydroxytetradecanoyl-[acyl-carrier-protein] and UDP-N-acetyl-alpha-D-glucosamine: step 6/6.</text>
</comment>
<comment type="similarity">
    <text evidence="1">Belongs to the LpxK family.</text>
</comment>
<organism>
    <name type="scientific">Psychrobacter cryohalolentis (strain ATCC BAA-1226 / DSM 17306 / VKM B-2378 / K5)</name>
    <dbReference type="NCBI Taxonomy" id="335284"/>
    <lineage>
        <taxon>Bacteria</taxon>
        <taxon>Pseudomonadati</taxon>
        <taxon>Pseudomonadota</taxon>
        <taxon>Gammaproteobacteria</taxon>
        <taxon>Moraxellales</taxon>
        <taxon>Moraxellaceae</taxon>
        <taxon>Psychrobacter</taxon>
    </lineage>
</organism>
<gene>
    <name evidence="1" type="primary">lpxK</name>
    <name type="ordered locus">Pcryo_1063</name>
</gene>
<protein>
    <recommendedName>
        <fullName evidence="1">Tetraacyldisaccharide 4'-kinase</fullName>
        <ecNumber evidence="1">2.7.1.130</ecNumber>
    </recommendedName>
    <alternativeName>
        <fullName evidence="1">Lipid A 4'-kinase</fullName>
    </alternativeName>
</protein>
<proteinExistence type="inferred from homology"/>
<accession>Q1QBV9</accession>
<reference key="1">
    <citation type="submission" date="2006-03" db="EMBL/GenBank/DDBJ databases">
        <title>Complete sequence of chromosome of Psychrobacter cryohalolentis K5.</title>
        <authorList>
            <consortium name="US DOE Joint Genome Institute"/>
            <person name="Copeland A."/>
            <person name="Lucas S."/>
            <person name="Lapidus A."/>
            <person name="Barry K."/>
            <person name="Detter J.C."/>
            <person name="Glavina T."/>
            <person name="Hammon N."/>
            <person name="Israni S."/>
            <person name="Dalin E."/>
            <person name="Tice H."/>
            <person name="Pitluck S."/>
            <person name="Brettin T."/>
            <person name="Bruce D."/>
            <person name="Han C."/>
            <person name="Tapia R."/>
            <person name="Sims D.R."/>
            <person name="Gilna P."/>
            <person name="Schmutz J."/>
            <person name="Larimer F."/>
            <person name="Land M."/>
            <person name="Hauser L."/>
            <person name="Kyrpides N."/>
            <person name="Kim E."/>
            <person name="Richardson P."/>
        </authorList>
    </citation>
    <scope>NUCLEOTIDE SEQUENCE [LARGE SCALE GENOMIC DNA]</scope>
    <source>
        <strain>ATCC BAA-1226 / DSM 17306 / VKM B-2378 / K5</strain>
    </source>
</reference>
<feature type="chain" id="PRO_0000291227" description="Tetraacyldisaccharide 4'-kinase">
    <location>
        <begin position="1"/>
        <end position="372"/>
    </location>
</feature>
<feature type="binding site" evidence="1">
    <location>
        <begin position="60"/>
        <end position="67"/>
    </location>
    <ligand>
        <name>ATP</name>
        <dbReference type="ChEBI" id="CHEBI:30616"/>
    </ligand>
</feature>
<sequence length="372" mass="41458">MNIETIITRAWQRKAAWLWLLLPVSWLYALLMVLRRQAYKVGILASYRAPIPVMVIGNITVGGSGKTPLIIALVRHLQQQGIKVGVISRGYGGDSSQMPALVTTESPPNVVGDEPCLIVNTTGTAMAVSPNRQQAIAILLEAYPDLQLIIADDGLQHYALQRDIEWVVVDAARGFGNKQLLPTGFLREPISRLKDANVIYHHKPDASSIYNKSDHNTLLTEHLTMHLQPDDLELLWSSNNQIDNLAVVAMAPEKGSQVHAVSGIGYPQRFFDTLNALGFEVIPHPYPDHYDFSLDELLQYADHPIIVTSKDAVKIRALIMQAIINQALSDEYKELVSRLWVLPVTAVLSDSCYESLQQQLQTLDIDISMRKQ</sequence>